<feature type="chain" id="PRO_1000034304" description="Transcription elongation factor GreA">
    <location>
        <begin position="1"/>
        <end position="160"/>
    </location>
</feature>
<feature type="coiled-coil region" evidence="1">
    <location>
        <begin position="1"/>
        <end position="72"/>
    </location>
</feature>
<organism>
    <name type="scientific">Streptococcus agalactiae serotype III (strain NEM316)</name>
    <dbReference type="NCBI Taxonomy" id="211110"/>
    <lineage>
        <taxon>Bacteria</taxon>
        <taxon>Bacillati</taxon>
        <taxon>Bacillota</taxon>
        <taxon>Bacilli</taxon>
        <taxon>Lactobacillales</taxon>
        <taxon>Streptococcaceae</taxon>
        <taxon>Streptococcus</taxon>
    </lineage>
</organism>
<keyword id="KW-0175">Coiled coil</keyword>
<keyword id="KW-0238">DNA-binding</keyword>
<keyword id="KW-0804">Transcription</keyword>
<keyword id="KW-0805">Transcription regulation</keyword>
<proteinExistence type="inferred from homology"/>
<comment type="function">
    <text evidence="1">Necessary for efficient RNA polymerase transcription elongation past template-encoded arresting sites. The arresting sites in DNA have the property of trapping a certain fraction of elongating RNA polymerases that pass through, resulting in locked ternary complexes. Cleavage of the nascent transcript by cleavage factors such as GreA or GreB allows the resumption of elongation from the new 3'terminus. GreA releases sequences of 2 to 3 nucleotides.</text>
</comment>
<comment type="similarity">
    <text evidence="1">Belongs to the GreA/GreB family.</text>
</comment>
<protein>
    <recommendedName>
        <fullName evidence="1">Transcription elongation factor GreA</fullName>
    </recommendedName>
    <alternativeName>
        <fullName evidence="1">Transcript cleavage factor GreA</fullName>
    </alternativeName>
</protein>
<dbReference type="EMBL" id="AL766852">
    <property type="protein sequence ID" value="CAD47320.1"/>
    <property type="molecule type" value="Genomic_DNA"/>
</dbReference>
<dbReference type="RefSeq" id="WP_000818772.1">
    <property type="nucleotide sequence ID" value="NC_004368.1"/>
</dbReference>
<dbReference type="SMR" id="Q8E3U5"/>
<dbReference type="GeneID" id="66886458"/>
<dbReference type="KEGG" id="san:gbs1661"/>
<dbReference type="eggNOG" id="COG0782">
    <property type="taxonomic scope" value="Bacteria"/>
</dbReference>
<dbReference type="HOGENOM" id="CLU_101379_2_1_9"/>
<dbReference type="Proteomes" id="UP000000823">
    <property type="component" value="Chromosome"/>
</dbReference>
<dbReference type="GO" id="GO:0003677">
    <property type="term" value="F:DNA binding"/>
    <property type="evidence" value="ECO:0007669"/>
    <property type="project" value="UniProtKB-UniRule"/>
</dbReference>
<dbReference type="GO" id="GO:0070063">
    <property type="term" value="F:RNA polymerase binding"/>
    <property type="evidence" value="ECO:0007669"/>
    <property type="project" value="InterPro"/>
</dbReference>
<dbReference type="GO" id="GO:0006354">
    <property type="term" value="P:DNA-templated transcription elongation"/>
    <property type="evidence" value="ECO:0007669"/>
    <property type="project" value="TreeGrafter"/>
</dbReference>
<dbReference type="GO" id="GO:0032784">
    <property type="term" value="P:regulation of DNA-templated transcription elongation"/>
    <property type="evidence" value="ECO:0007669"/>
    <property type="project" value="UniProtKB-UniRule"/>
</dbReference>
<dbReference type="FunFam" id="1.10.287.180:FF:000001">
    <property type="entry name" value="Transcription elongation factor GreA"/>
    <property type="match status" value="1"/>
</dbReference>
<dbReference type="FunFam" id="3.10.50.30:FF:000001">
    <property type="entry name" value="Transcription elongation factor GreA"/>
    <property type="match status" value="1"/>
</dbReference>
<dbReference type="Gene3D" id="3.10.50.30">
    <property type="entry name" value="Transcription elongation factor, GreA/GreB, C-terminal domain"/>
    <property type="match status" value="1"/>
</dbReference>
<dbReference type="Gene3D" id="1.10.287.180">
    <property type="entry name" value="Transcription elongation factor, GreA/GreB, N-terminal domain"/>
    <property type="match status" value="1"/>
</dbReference>
<dbReference type="HAMAP" id="MF_00105">
    <property type="entry name" value="GreA_GreB"/>
    <property type="match status" value="1"/>
</dbReference>
<dbReference type="InterPro" id="IPR036953">
    <property type="entry name" value="GreA/GreB_C_sf"/>
</dbReference>
<dbReference type="InterPro" id="IPR018151">
    <property type="entry name" value="TF_GreA/GreB_CS"/>
</dbReference>
<dbReference type="InterPro" id="IPR006359">
    <property type="entry name" value="Tscrpt_elong_fac_GreA"/>
</dbReference>
<dbReference type="InterPro" id="IPR028624">
    <property type="entry name" value="Tscrpt_elong_fac_GreA/B"/>
</dbReference>
<dbReference type="InterPro" id="IPR001437">
    <property type="entry name" value="Tscrpt_elong_fac_GreA/B_C"/>
</dbReference>
<dbReference type="InterPro" id="IPR023459">
    <property type="entry name" value="Tscrpt_elong_fac_GreA/B_fam"/>
</dbReference>
<dbReference type="InterPro" id="IPR022691">
    <property type="entry name" value="Tscrpt_elong_fac_GreA/B_N"/>
</dbReference>
<dbReference type="InterPro" id="IPR036805">
    <property type="entry name" value="Tscrpt_elong_fac_GreA/B_N_sf"/>
</dbReference>
<dbReference type="NCBIfam" id="TIGR01462">
    <property type="entry name" value="greA"/>
    <property type="match status" value="1"/>
</dbReference>
<dbReference type="NCBIfam" id="NF001260">
    <property type="entry name" value="PRK00226.1-1"/>
    <property type="match status" value="1"/>
</dbReference>
<dbReference type="NCBIfam" id="NF001263">
    <property type="entry name" value="PRK00226.1-4"/>
    <property type="match status" value="1"/>
</dbReference>
<dbReference type="PANTHER" id="PTHR30437">
    <property type="entry name" value="TRANSCRIPTION ELONGATION FACTOR GREA"/>
    <property type="match status" value="1"/>
</dbReference>
<dbReference type="PANTHER" id="PTHR30437:SF4">
    <property type="entry name" value="TRANSCRIPTION ELONGATION FACTOR GREA"/>
    <property type="match status" value="1"/>
</dbReference>
<dbReference type="Pfam" id="PF01272">
    <property type="entry name" value="GreA_GreB"/>
    <property type="match status" value="1"/>
</dbReference>
<dbReference type="Pfam" id="PF03449">
    <property type="entry name" value="GreA_GreB_N"/>
    <property type="match status" value="1"/>
</dbReference>
<dbReference type="PIRSF" id="PIRSF006092">
    <property type="entry name" value="GreA_GreB"/>
    <property type="match status" value="1"/>
</dbReference>
<dbReference type="SUPFAM" id="SSF54534">
    <property type="entry name" value="FKBP-like"/>
    <property type="match status" value="1"/>
</dbReference>
<dbReference type="SUPFAM" id="SSF46557">
    <property type="entry name" value="GreA transcript cleavage protein, N-terminal domain"/>
    <property type="match status" value="1"/>
</dbReference>
<dbReference type="PROSITE" id="PS00829">
    <property type="entry name" value="GREAB_1"/>
    <property type="match status" value="1"/>
</dbReference>
<dbReference type="PROSITE" id="PS00830">
    <property type="entry name" value="GREAB_2"/>
    <property type="match status" value="1"/>
</dbReference>
<accession>Q8E3U5</accession>
<evidence type="ECO:0000255" key="1">
    <source>
        <dbReference type="HAMAP-Rule" id="MF_00105"/>
    </source>
</evidence>
<name>GREA_STRA3</name>
<gene>
    <name evidence="1" type="primary">greA</name>
    <name type="ordered locus">gbs1661</name>
</gene>
<sequence length="160" mass="17600">MAEKTYPMTQVEKDQLEKELEELKLVRRPEVVERIKIARSYGDLSENSEYDAAKDEQAFVEGQIQILETKIRYAEIIDSDAVAKDEVAIGKTVLVQEVGTNDKDTYHIVGAAGADIFSGKISNESPIAHALIGKKTGDLATIESPAGSYQVEIISVEKTN</sequence>
<reference key="1">
    <citation type="journal article" date="2002" name="Mol. Microbiol.">
        <title>Genome sequence of Streptococcus agalactiae, a pathogen causing invasive neonatal disease.</title>
        <authorList>
            <person name="Glaser P."/>
            <person name="Rusniok C."/>
            <person name="Buchrieser C."/>
            <person name="Chevalier F."/>
            <person name="Frangeul L."/>
            <person name="Msadek T."/>
            <person name="Zouine M."/>
            <person name="Couve E."/>
            <person name="Lalioui L."/>
            <person name="Poyart C."/>
            <person name="Trieu-Cuot P."/>
            <person name="Kunst F."/>
        </authorList>
    </citation>
    <scope>NUCLEOTIDE SEQUENCE [LARGE SCALE GENOMIC DNA]</scope>
    <source>
        <strain>NEM316</strain>
    </source>
</reference>